<dbReference type="EC" id="4.1.3.40" evidence="1"/>
<dbReference type="EMBL" id="AM286690">
    <property type="protein sequence ID" value="CAL15612.1"/>
    <property type="molecule type" value="Genomic_DNA"/>
</dbReference>
<dbReference type="RefSeq" id="WP_011587461.1">
    <property type="nucleotide sequence ID" value="NC_008260.1"/>
</dbReference>
<dbReference type="SMR" id="Q0VTA8"/>
<dbReference type="STRING" id="393595.ABO_0164"/>
<dbReference type="KEGG" id="abo:ABO_0164"/>
<dbReference type="eggNOG" id="COG3161">
    <property type="taxonomic scope" value="Bacteria"/>
</dbReference>
<dbReference type="HOGENOM" id="CLU_096824_3_1_6"/>
<dbReference type="OrthoDB" id="9789493at2"/>
<dbReference type="UniPathway" id="UPA00232"/>
<dbReference type="Proteomes" id="UP000008871">
    <property type="component" value="Chromosome"/>
</dbReference>
<dbReference type="GO" id="GO:0005829">
    <property type="term" value="C:cytosol"/>
    <property type="evidence" value="ECO:0007669"/>
    <property type="project" value="TreeGrafter"/>
</dbReference>
<dbReference type="GO" id="GO:0008813">
    <property type="term" value="F:chorismate lyase activity"/>
    <property type="evidence" value="ECO:0007669"/>
    <property type="project" value="UniProtKB-UniRule"/>
</dbReference>
<dbReference type="GO" id="GO:0042866">
    <property type="term" value="P:pyruvate biosynthetic process"/>
    <property type="evidence" value="ECO:0007669"/>
    <property type="project" value="UniProtKB-UniRule"/>
</dbReference>
<dbReference type="GO" id="GO:0006744">
    <property type="term" value="P:ubiquinone biosynthetic process"/>
    <property type="evidence" value="ECO:0007669"/>
    <property type="project" value="UniProtKB-UniRule"/>
</dbReference>
<dbReference type="Gene3D" id="3.40.1410.10">
    <property type="entry name" value="Chorismate lyase-like"/>
    <property type="match status" value="1"/>
</dbReference>
<dbReference type="HAMAP" id="MF_01632">
    <property type="entry name" value="UbiC"/>
    <property type="match status" value="1"/>
</dbReference>
<dbReference type="InterPro" id="IPR007440">
    <property type="entry name" value="Chorismate--pyruvate_lyase"/>
</dbReference>
<dbReference type="InterPro" id="IPR028978">
    <property type="entry name" value="Chorismate_lyase_/UTRA_dom_sf"/>
</dbReference>
<dbReference type="PANTHER" id="PTHR38683">
    <property type="entry name" value="CHORISMATE PYRUVATE-LYASE"/>
    <property type="match status" value="1"/>
</dbReference>
<dbReference type="PANTHER" id="PTHR38683:SF1">
    <property type="entry name" value="CHORISMATE PYRUVATE-LYASE"/>
    <property type="match status" value="1"/>
</dbReference>
<dbReference type="Pfam" id="PF04345">
    <property type="entry name" value="Chor_lyase"/>
    <property type="match status" value="1"/>
</dbReference>
<dbReference type="SUPFAM" id="SSF64288">
    <property type="entry name" value="Chorismate lyase-like"/>
    <property type="match status" value="1"/>
</dbReference>
<evidence type="ECO:0000255" key="1">
    <source>
        <dbReference type="HAMAP-Rule" id="MF_01632"/>
    </source>
</evidence>
<comment type="function">
    <text evidence="1">Removes the pyruvyl group from chorismate, with concomitant aromatization of the ring, to provide 4-hydroxybenzoate (4HB) for the ubiquinone pathway.</text>
</comment>
<comment type="catalytic activity">
    <reaction evidence="1">
        <text>chorismate = 4-hydroxybenzoate + pyruvate</text>
        <dbReference type="Rhea" id="RHEA:16505"/>
        <dbReference type="ChEBI" id="CHEBI:15361"/>
        <dbReference type="ChEBI" id="CHEBI:17879"/>
        <dbReference type="ChEBI" id="CHEBI:29748"/>
        <dbReference type="EC" id="4.1.3.40"/>
    </reaction>
</comment>
<comment type="pathway">
    <text evidence="1">Cofactor biosynthesis; ubiquinone biosynthesis.</text>
</comment>
<comment type="subcellular location">
    <subcellularLocation>
        <location evidence="1">Cytoplasm</location>
    </subcellularLocation>
</comment>
<comment type="similarity">
    <text evidence="1">Belongs to the UbiC family.</text>
</comment>
<protein>
    <recommendedName>
        <fullName evidence="1">Probable chorismate pyruvate-lyase</fullName>
        <shortName evidence="1">CL</shortName>
        <shortName evidence="1">CPL</shortName>
        <ecNumber evidence="1">4.1.3.40</ecNumber>
    </recommendedName>
</protein>
<accession>Q0VTA8</accession>
<name>UBIC_ALCBS</name>
<sequence>MLPAALHPDSLWRPLEQLVLPPIIRDWMADPDSLTRRLKRYGHFSVVPGLHAIALPRADERRLLSLPVRRAALIREVTLHLDDTPVVAARSVLPLTSLAGANRSLGHMGSRSLGLELYNRPICQRDQVWARLASTDQHHSLCWGRQSRFIKRGAPLLVAEYFLPALWEKLHVARCVQASWLHDKAYLYASIRGEPTDAVRLSRF</sequence>
<proteinExistence type="inferred from homology"/>
<organism>
    <name type="scientific">Alcanivorax borkumensis (strain ATCC 700651 / DSM 11573 / NCIMB 13689 / SK2)</name>
    <dbReference type="NCBI Taxonomy" id="393595"/>
    <lineage>
        <taxon>Bacteria</taxon>
        <taxon>Pseudomonadati</taxon>
        <taxon>Pseudomonadota</taxon>
        <taxon>Gammaproteobacteria</taxon>
        <taxon>Oceanospirillales</taxon>
        <taxon>Alcanivoracaceae</taxon>
        <taxon>Alcanivorax</taxon>
    </lineage>
</organism>
<gene>
    <name evidence="1" type="primary">ubiC</name>
    <name type="ordered locus">ABO_0164</name>
</gene>
<reference key="1">
    <citation type="journal article" date="2006" name="Nat. Biotechnol.">
        <title>Genome sequence of the ubiquitous hydrocarbon-degrading marine bacterium Alcanivorax borkumensis.</title>
        <authorList>
            <person name="Schneiker S."/>
            <person name="Martins dos Santos V.A.P."/>
            <person name="Bartels D."/>
            <person name="Bekel T."/>
            <person name="Brecht M."/>
            <person name="Buhrmester J."/>
            <person name="Chernikova T.N."/>
            <person name="Denaro R."/>
            <person name="Ferrer M."/>
            <person name="Gertler C."/>
            <person name="Goesmann A."/>
            <person name="Golyshina O.V."/>
            <person name="Kaminski F."/>
            <person name="Khachane A.N."/>
            <person name="Lang S."/>
            <person name="Linke B."/>
            <person name="McHardy A.C."/>
            <person name="Meyer F."/>
            <person name="Nechitaylo T."/>
            <person name="Puehler A."/>
            <person name="Regenhardt D."/>
            <person name="Rupp O."/>
            <person name="Sabirova J.S."/>
            <person name="Selbitschka W."/>
            <person name="Yakimov M.M."/>
            <person name="Timmis K.N."/>
            <person name="Vorhoelter F.-J."/>
            <person name="Weidner S."/>
            <person name="Kaiser O."/>
            <person name="Golyshin P.N."/>
        </authorList>
    </citation>
    <scope>NUCLEOTIDE SEQUENCE [LARGE SCALE GENOMIC DNA]</scope>
    <source>
        <strain>ATCC 700651 / DSM 11573 / NCIMB 13689 / SK2</strain>
    </source>
</reference>
<feature type="chain" id="PRO_0000255899" description="Probable chorismate pyruvate-lyase">
    <location>
        <begin position="1"/>
        <end position="204"/>
    </location>
</feature>
<feature type="binding site" evidence="1">
    <location>
        <position position="75"/>
    </location>
    <ligand>
        <name>substrate</name>
    </ligand>
</feature>
<feature type="binding site" evidence="1">
    <location>
        <position position="113"/>
    </location>
    <ligand>
        <name>substrate</name>
    </ligand>
</feature>
<feature type="binding site" evidence="1">
    <location>
        <position position="160"/>
    </location>
    <ligand>
        <name>substrate</name>
    </ligand>
</feature>
<keyword id="KW-0963">Cytoplasm</keyword>
<keyword id="KW-0456">Lyase</keyword>
<keyword id="KW-0670">Pyruvate</keyword>
<keyword id="KW-1185">Reference proteome</keyword>
<keyword id="KW-0831">Ubiquinone biosynthesis</keyword>